<evidence type="ECO:0000255" key="1">
    <source>
        <dbReference type="HAMAP-Rule" id="MF_00641"/>
    </source>
</evidence>
<organism>
    <name type="scientific">Rhizobium etli (strain CIAT 652)</name>
    <dbReference type="NCBI Taxonomy" id="491916"/>
    <lineage>
        <taxon>Bacteria</taxon>
        <taxon>Pseudomonadati</taxon>
        <taxon>Pseudomonadota</taxon>
        <taxon>Alphaproteobacteria</taxon>
        <taxon>Hyphomicrobiales</taxon>
        <taxon>Rhizobiaceae</taxon>
        <taxon>Rhizobium/Agrobacterium group</taxon>
        <taxon>Rhizobium</taxon>
    </lineage>
</organism>
<sequence>MSRIDKNGLAVEAVLHDFLVQEVLPGLAIDADKFFADFSAIVHDLAPINRALLKKRDELQLKIDDWYRQHGAPTDMDDYQSFLRAIGYLLPEGSDFQVSTQNVDPEIASIAGPQLVVPVMNARYALNAANARWGSLYDALYGTDAIPEGDGAEKGRGYNPKRGEKVIAWVRDFLDTSVPLQDSRWKDVGSFAVRDGALIIRSTDGEQAMLRDGGHFAGYRGDAATPTHILLKNNGIHIEIVIDAATAIGKTDPAHISDVWLESAITTIMDCEDSIAAVDAEDKVVVYRNWLGLMKGDLQEEVAKGGASFIRKLNPDLDYTGPDGTTFELHRRSLMLVRNVGHLMTNPAILDRDGNEVPEGIMDAVITGLIALYDIGPAGRKKNSRTGSMYVVKPKMHGPEEVAFAVEVFSRVEDALGLARNTIKMGIMDEERRTTVNLKECIRAARERVVFINTGFLDRTGDEIHTSMEAGPMIRKGDMRQAAWISAYENWNVDIGLECGLAGHAQIGKGMWAMPDLMAAMLEQKIAHPKAGANTAWVPSPTAATLHATHYHRVNVAKVQQGLKDRARAKLSDILSVPVAVRPNWSQEEIQRELDNNAQGILGYVVRWVDQGVGCSKVPDINNIGLMEDRATLRISAQHMANWLHHKVVSEAQIVETMKRMAAVVDRQNEQDPVYQPISGNFDGSIAFQAALDLVLKGREQPNGYTEPVLHRRRLELKAKQAA</sequence>
<accession>B3PWJ0</accession>
<gene>
    <name evidence="1" type="primary">glcB</name>
    <name type="ordered locus">RHECIAT_CH0000055</name>
</gene>
<feature type="chain" id="PRO_1000130895" description="Malate synthase G">
    <location>
        <begin position="1"/>
        <end position="723"/>
    </location>
</feature>
<feature type="active site" description="Proton acceptor" evidence="1">
    <location>
        <position position="338"/>
    </location>
</feature>
<feature type="active site" description="Proton donor" evidence="1">
    <location>
        <position position="629"/>
    </location>
</feature>
<feature type="binding site" evidence="1">
    <location>
        <position position="116"/>
    </location>
    <ligand>
        <name>acetyl-CoA</name>
        <dbReference type="ChEBI" id="CHEBI:57288"/>
    </ligand>
</feature>
<feature type="binding site" evidence="1">
    <location>
        <begin position="123"/>
        <end position="124"/>
    </location>
    <ligand>
        <name>acetyl-CoA</name>
        <dbReference type="ChEBI" id="CHEBI:57288"/>
    </ligand>
</feature>
<feature type="binding site" evidence="1">
    <location>
        <position position="274"/>
    </location>
    <ligand>
        <name>acetyl-CoA</name>
        <dbReference type="ChEBI" id="CHEBI:57288"/>
    </ligand>
</feature>
<feature type="binding site" evidence="1">
    <location>
        <position position="311"/>
    </location>
    <ligand>
        <name>acetyl-CoA</name>
        <dbReference type="ChEBI" id="CHEBI:57288"/>
    </ligand>
</feature>
<feature type="binding site" evidence="1">
    <location>
        <position position="338"/>
    </location>
    <ligand>
        <name>glyoxylate</name>
        <dbReference type="ChEBI" id="CHEBI:36655"/>
    </ligand>
</feature>
<feature type="binding site" evidence="1">
    <location>
        <position position="430"/>
    </location>
    <ligand>
        <name>glyoxylate</name>
        <dbReference type="ChEBI" id="CHEBI:36655"/>
    </ligand>
</feature>
<feature type="binding site" evidence="1">
    <location>
        <position position="430"/>
    </location>
    <ligand>
        <name>Mg(2+)</name>
        <dbReference type="ChEBI" id="CHEBI:18420"/>
    </ligand>
</feature>
<feature type="binding site" evidence="1">
    <location>
        <begin position="455"/>
        <end position="458"/>
    </location>
    <ligand>
        <name>glyoxylate</name>
        <dbReference type="ChEBI" id="CHEBI:36655"/>
    </ligand>
</feature>
<feature type="binding site" evidence="1">
    <location>
        <position position="458"/>
    </location>
    <ligand>
        <name>Mg(2+)</name>
        <dbReference type="ChEBI" id="CHEBI:18420"/>
    </ligand>
</feature>
<feature type="binding site" evidence="1">
    <location>
        <position position="539"/>
    </location>
    <ligand>
        <name>acetyl-CoA</name>
        <dbReference type="ChEBI" id="CHEBI:57288"/>
    </ligand>
</feature>
<feature type="modified residue" description="Cysteine sulfenic acid (-SOH)" evidence="1">
    <location>
        <position position="615"/>
    </location>
</feature>
<dbReference type="EC" id="2.3.3.9" evidence="1"/>
<dbReference type="EMBL" id="CP001074">
    <property type="protein sequence ID" value="ACE89058.1"/>
    <property type="molecule type" value="Genomic_DNA"/>
</dbReference>
<dbReference type="SMR" id="B3PWJ0"/>
<dbReference type="KEGG" id="rec:RHECIAT_CH0000055"/>
<dbReference type="eggNOG" id="COG2225">
    <property type="taxonomic scope" value="Bacteria"/>
</dbReference>
<dbReference type="HOGENOM" id="CLU_028446_1_0_5"/>
<dbReference type="UniPathway" id="UPA00703">
    <property type="reaction ID" value="UER00720"/>
</dbReference>
<dbReference type="Proteomes" id="UP000008817">
    <property type="component" value="Chromosome"/>
</dbReference>
<dbReference type="GO" id="GO:0005829">
    <property type="term" value="C:cytosol"/>
    <property type="evidence" value="ECO:0007669"/>
    <property type="project" value="TreeGrafter"/>
</dbReference>
<dbReference type="GO" id="GO:0000287">
    <property type="term" value="F:magnesium ion binding"/>
    <property type="evidence" value="ECO:0007669"/>
    <property type="project" value="TreeGrafter"/>
</dbReference>
<dbReference type="GO" id="GO:0004474">
    <property type="term" value="F:malate synthase activity"/>
    <property type="evidence" value="ECO:0007669"/>
    <property type="project" value="UniProtKB-UniRule"/>
</dbReference>
<dbReference type="GO" id="GO:0009436">
    <property type="term" value="P:glyoxylate catabolic process"/>
    <property type="evidence" value="ECO:0007669"/>
    <property type="project" value="TreeGrafter"/>
</dbReference>
<dbReference type="GO" id="GO:0006097">
    <property type="term" value="P:glyoxylate cycle"/>
    <property type="evidence" value="ECO:0007669"/>
    <property type="project" value="UniProtKB-UniRule"/>
</dbReference>
<dbReference type="GO" id="GO:0006099">
    <property type="term" value="P:tricarboxylic acid cycle"/>
    <property type="evidence" value="ECO:0007669"/>
    <property type="project" value="UniProtKB-KW"/>
</dbReference>
<dbReference type="CDD" id="cd00728">
    <property type="entry name" value="malate_synt_G"/>
    <property type="match status" value="1"/>
</dbReference>
<dbReference type="FunFam" id="3.20.20.360:FF:000002">
    <property type="entry name" value="Malate synthase G"/>
    <property type="match status" value="1"/>
</dbReference>
<dbReference type="Gene3D" id="3.20.20.360">
    <property type="entry name" value="Malate synthase, domain 3"/>
    <property type="match status" value="2"/>
</dbReference>
<dbReference type="Gene3D" id="1.20.1220.12">
    <property type="entry name" value="Malate synthase, domain III"/>
    <property type="match status" value="1"/>
</dbReference>
<dbReference type="HAMAP" id="MF_00641">
    <property type="entry name" value="Malate_synth_G"/>
    <property type="match status" value="1"/>
</dbReference>
<dbReference type="InterPro" id="IPR044856">
    <property type="entry name" value="Malate_synth_C_sf"/>
</dbReference>
<dbReference type="InterPro" id="IPR011076">
    <property type="entry name" value="Malate_synth_sf"/>
</dbReference>
<dbReference type="InterPro" id="IPR001465">
    <property type="entry name" value="Malate_synthase_TIM"/>
</dbReference>
<dbReference type="InterPro" id="IPR006253">
    <property type="entry name" value="Malate_synthG"/>
</dbReference>
<dbReference type="InterPro" id="IPR048355">
    <property type="entry name" value="MS_C"/>
</dbReference>
<dbReference type="InterPro" id="IPR048356">
    <property type="entry name" value="MS_N"/>
</dbReference>
<dbReference type="InterPro" id="IPR046363">
    <property type="entry name" value="MS_N_TIM-barrel_dom"/>
</dbReference>
<dbReference type="InterPro" id="IPR048357">
    <property type="entry name" value="MSG_insertion"/>
</dbReference>
<dbReference type="NCBIfam" id="TIGR01345">
    <property type="entry name" value="malate_syn_G"/>
    <property type="match status" value="1"/>
</dbReference>
<dbReference type="NCBIfam" id="NF002825">
    <property type="entry name" value="PRK02999.1"/>
    <property type="match status" value="1"/>
</dbReference>
<dbReference type="PANTHER" id="PTHR42739">
    <property type="entry name" value="MALATE SYNTHASE G"/>
    <property type="match status" value="1"/>
</dbReference>
<dbReference type="PANTHER" id="PTHR42739:SF1">
    <property type="entry name" value="MALATE SYNTHASE G"/>
    <property type="match status" value="1"/>
</dbReference>
<dbReference type="Pfam" id="PF20659">
    <property type="entry name" value="MS_C"/>
    <property type="match status" value="1"/>
</dbReference>
<dbReference type="Pfam" id="PF20656">
    <property type="entry name" value="MS_N"/>
    <property type="match status" value="1"/>
</dbReference>
<dbReference type="Pfam" id="PF01274">
    <property type="entry name" value="MS_TIM-barrel"/>
    <property type="match status" value="1"/>
</dbReference>
<dbReference type="Pfam" id="PF20658">
    <property type="entry name" value="MSG_insertion"/>
    <property type="match status" value="1"/>
</dbReference>
<dbReference type="SUPFAM" id="SSF51645">
    <property type="entry name" value="Malate synthase G"/>
    <property type="match status" value="1"/>
</dbReference>
<keyword id="KW-0963">Cytoplasm</keyword>
<keyword id="KW-0329">Glyoxylate bypass</keyword>
<keyword id="KW-0460">Magnesium</keyword>
<keyword id="KW-0479">Metal-binding</keyword>
<keyword id="KW-0558">Oxidation</keyword>
<keyword id="KW-0808">Transferase</keyword>
<keyword id="KW-0816">Tricarboxylic acid cycle</keyword>
<name>MASZ_RHIE6</name>
<proteinExistence type="inferred from homology"/>
<comment type="function">
    <text evidence="1">Involved in the glycolate utilization. Catalyzes the condensation and subsequent hydrolysis of acetyl-coenzyme A (acetyl-CoA) and glyoxylate to form malate and CoA.</text>
</comment>
<comment type="catalytic activity">
    <reaction evidence="1">
        <text>glyoxylate + acetyl-CoA + H2O = (S)-malate + CoA + H(+)</text>
        <dbReference type="Rhea" id="RHEA:18181"/>
        <dbReference type="ChEBI" id="CHEBI:15377"/>
        <dbReference type="ChEBI" id="CHEBI:15378"/>
        <dbReference type="ChEBI" id="CHEBI:15589"/>
        <dbReference type="ChEBI" id="CHEBI:36655"/>
        <dbReference type="ChEBI" id="CHEBI:57287"/>
        <dbReference type="ChEBI" id="CHEBI:57288"/>
        <dbReference type="EC" id="2.3.3.9"/>
    </reaction>
</comment>
<comment type="cofactor">
    <cofactor evidence="1">
        <name>Mg(2+)</name>
        <dbReference type="ChEBI" id="CHEBI:18420"/>
    </cofactor>
</comment>
<comment type="pathway">
    <text evidence="1">Carbohydrate metabolism; glyoxylate cycle; (S)-malate from isocitrate: step 2/2.</text>
</comment>
<comment type="subunit">
    <text evidence="1">Monomer.</text>
</comment>
<comment type="subcellular location">
    <subcellularLocation>
        <location evidence="1">Cytoplasm</location>
    </subcellularLocation>
</comment>
<comment type="similarity">
    <text evidence="1">Belongs to the malate synthase family. GlcB subfamily.</text>
</comment>
<protein>
    <recommendedName>
        <fullName evidence="1">Malate synthase G</fullName>
        <ecNumber evidence="1">2.3.3.9</ecNumber>
    </recommendedName>
</protein>
<reference key="1">
    <citation type="journal article" date="2010" name="Appl. Environ. Microbiol.">
        <title>Conserved symbiotic plasmid DNA sequences in the multireplicon pangenomic structure of Rhizobium etli.</title>
        <authorList>
            <person name="Gonzalez V."/>
            <person name="Acosta J.L."/>
            <person name="Santamaria R.I."/>
            <person name="Bustos P."/>
            <person name="Fernandez J.L."/>
            <person name="Hernandez Gonzalez I.L."/>
            <person name="Diaz R."/>
            <person name="Flores M."/>
            <person name="Palacios R."/>
            <person name="Mora J."/>
            <person name="Davila G."/>
        </authorList>
    </citation>
    <scope>NUCLEOTIDE SEQUENCE [LARGE SCALE GENOMIC DNA]</scope>
    <source>
        <strain>CIAT 652</strain>
    </source>
</reference>